<gene>
    <name type="primary">COPB1</name>
</gene>
<proteinExistence type="evidence at protein level"/>
<protein>
    <recommendedName>
        <fullName>Coatomer subunit beta</fullName>
    </recommendedName>
    <alternativeName>
        <fullName>Beta-coat protein</fullName>
        <shortName>Beta-COP</shortName>
    </alternativeName>
</protein>
<comment type="function">
    <text evidence="5">The coatomer is a cytosolic protein complex that binds to dilysine motifs and reversibly associates with Golgi non-clathrin-coated vesicles, which further mediate biosynthetic protein transport from the ER, via the Golgi up to the trans Golgi network. Coatomer complex is required for budding from Golgi membranes, and is essential for the retrograde Golgi-to-ER transport of dilysine-tagged proteins. In mammals, the coatomer can only be recruited by membranes associated to ADP-ribosylation factors (ARFs), which are small GTP-binding proteins; the complex also influences the Golgi structural integrity, as well as the processing, activity, and endocytic recycling of LDL receptors. Involved in the Golgi disassembly and reassembly processes during cell cycle. Plays a functional role in facilitating the transport of kappa-type opioid receptor mRNAs into axons and enhances translation of these proteins. Required for limiting lipid storage in lipid droplets. Involved in lipid homeostasis by regulating the presence of perilipin family members PLIN2 and PLIN3 at the lipid droplet surface and promoting the association of adipocyte surface triglyceride lipase (PNPLA2) with the lipid droplet to mediate lipolysis. Involved in autophagy by playing a role in early endosome function. Plays a role in organellar compartmentalization of secretory compartments including endoplasmic reticulum (ER)-Golgi intermediate compartment (ERGIC), Golgi, trans-Golgi network (TGN) and recycling endosomes, and in biosynthetic transport of CAV1.</text>
</comment>
<comment type="subunit">
    <text evidence="2 3 4">Oligomeric complex that consists of at least the alpha, beta, beta', gamma, delta, epsilon and zeta subunits. Interacts with ARF1 (myristoylated); this interaction is required for binding of COPB1 to Golgi membranes. Interacts with CAPN8 and PRKCE (By similarity). Interacts with SCYL1 (By similarity). Interacts with COPG1 (By similarity). Interacts (via trunk domain) with ARF1 (via switch I region); the interaction is direct (By similarity). Interacts with KCNK2 (via N-terminus); this interaction increases the channel-mediated whole cell currents and promotes plasma membrane expression of KCNK2 (By similarity). Interacts with STX17 (By similarity). Interacts with TMEM115 (By similarity). Interacts with TMEM41B (By similarity).</text>
</comment>
<comment type="subcellular location">
    <subcellularLocation>
        <location evidence="6">Cytoplasm</location>
        <location evidence="6">Cytosol</location>
    </subcellularLocation>
    <subcellularLocation>
        <location evidence="5 7">Golgi apparatus membrane</location>
        <topology>Peripheral membrane protein</topology>
        <orientation>Cytoplasmic side</orientation>
    </subcellularLocation>
    <subcellularLocation>
        <location evidence="1">Cytoplasmic vesicle</location>
        <location evidence="1">COPI-coated vesicle membrane</location>
        <topology evidence="1">Peripheral membrane protein</topology>
        <orientation evidence="1">Cytoplasmic side</orientation>
    </subcellularLocation>
    <subcellularLocation>
        <location evidence="1">Cell membrane</location>
    </subcellularLocation>
    <subcellularLocation>
        <location evidence="1">Endoplasmic reticulum-Golgi intermediate compartment</location>
    </subcellularLocation>
    <text evidence="1">The coatomer is cytoplasmic or polymerized on the cytoplasmic side of the Golgi, as well as on the vesicles/buds originating from it (Ref.1). Proteolytic cleavage by CAPN8 triggers translocation from Golgi to cytoplasm (By similarity). Found in perinuclear vesicular-tubular clusters (VTCs) and in the Golgi region where associated with vesicles, buds and rims of the Golgi stack (By similarity). Occasionally present at the trans-side of Golgi, but mainly present at the cis-Golgi side in transitional areas (TA), on so-called peripheral elements (PE) consisting of tubules and vesicles located between the cup-shaped transitional elements (TE) of the rough endoplasmic reticulum (RER) and the cis-most Golgi cisternae (By similarity). Present in cytoplasm, not associated with visible coats or membranes, with a minor fraction present on small clusters of tubules and vesicles (By similarity). Some association with high-density and low-density microsomes and mitochondria/nuclei fraction (By similarity). Very little found in plasma membrane fraction (By similarity).</text>
</comment>
<comment type="PTM">
    <text evidence="1">Proteolytically cleaved between Ser-528 and Ser-529 by CAPN8.</text>
</comment>
<comment type="miscellaneous">
    <text>Brefeldin A induces dissociation from the Golgi of the beta-COP and presumably the other coatomer subunits.</text>
</comment>
<keyword id="KW-0007">Acetylation</keyword>
<keyword id="KW-1003">Cell membrane</keyword>
<keyword id="KW-0963">Cytoplasm</keyword>
<keyword id="KW-0968">Cytoplasmic vesicle</keyword>
<keyword id="KW-0931">ER-Golgi transport</keyword>
<keyword id="KW-0333">Golgi apparatus</keyword>
<keyword id="KW-0472">Membrane</keyword>
<keyword id="KW-0653">Protein transport</keyword>
<keyword id="KW-1185">Reference proteome</keyword>
<keyword id="KW-0677">Repeat</keyword>
<keyword id="KW-0813">Transport</keyword>
<accession>A0JN39</accession>
<sequence>MTAAENVCYTLINVPMDSEPPSEISLKNDLEKGDVKSKTEALKKVIIMILNGEKLPGLLMTIIRFVLPLQDHTIKKLLLVFWEIVPKTTPDGRLLHEMILVCDAYRKDLQHPNEFIRGSTLRFLCKLKEAELLEPLMPAIRACLEHRHSYVRRNAVLAIYTIYRNFEHLIPDAPELIHDFLVNEKDASCKRNAFMMLIHADQDRALDYLSTCIDQVQTFGDILQLVIVELIYKVCHANPSERARFIRCIYNLLQSSSPAVKYEAAGTLVTLSSAPTAIKAAAQCYIDLIIKESDNNVKLIVLDRLIELKEHPAHERVLQDLVMDILRVLSTPDLEVRKKTLQLALDLVSSRNVEELVIVLKKEVIKTNNVSEHEDTDKYRQLLVRTLHSCSVRFPDMAANVIPVLMEFLSDSNEAAAADVLEFVREAIQRFDNLRMLIVEKMLEVFHAIKSVKIYRGALWILGEYCSTKDDIQSVMTEVRRSLGEIPIVESEIKKEAGELKPEEEITVGPVQKLVTEMGTYATQSALSSSRPTKKEEERPPLRGFLLDGDFFVAASLATTLTKIALRYVALVQEKKKQNSFVAEAMLLMATILHLGKSSLPKKPITDDDVDRISLCLKVLSECSPLMNDIFNKECRQSLSHMLSAKLEEEKLSQKKESEKRNVTVQPDDPISFMQLTAKNEMNCKEDQFQLSLLAAMGNTQRKEAADPLASKLNKVTQLTGFSDPVYAEAYVHVNQYDIVLDVLVVNQTSDTLQNCTLELATLGDLKLVEKPSPLTLAPHDFANIKANVKVASTENGIIFGNIVYDVSGAASDRNCVVLSDIHIDIMDYIQPATCTDAEFRQMWAEFEWENKVTVNTNIVDLNDYLQHILKSTNMKCLTPEKALSGYCGFMAANLYARSIFGEDALANVSIEKPIQQGPEAPVTGHIRIRAKSQGMALSLGDKINLSQKKNSI</sequence>
<feature type="initiator methionine" description="Removed" evidence="3">
    <location>
        <position position="1"/>
    </location>
</feature>
<feature type="chain" id="PRO_0000283808" description="Coatomer subunit beta">
    <location>
        <begin position="2"/>
        <end position="953"/>
    </location>
</feature>
<feature type="repeat" description="HEAT 1">
    <location>
        <begin position="96"/>
        <end position="131"/>
    </location>
</feature>
<feature type="repeat" description="HEAT 2">
    <location>
        <begin position="132"/>
        <end position="168"/>
    </location>
</feature>
<feature type="repeat" description="HEAT 3">
    <location>
        <begin position="240"/>
        <end position="276"/>
    </location>
</feature>
<feature type="repeat" description="HEAT 4">
    <location>
        <begin position="277"/>
        <end position="314"/>
    </location>
</feature>
<feature type="repeat" description="HEAT 5">
    <location>
        <begin position="316"/>
        <end position="353"/>
    </location>
</feature>
<feature type="repeat" description="HEAT 6">
    <location>
        <begin position="396"/>
        <end position="433"/>
    </location>
</feature>
<feature type="modified residue" description="N-acetylthreonine" evidence="3">
    <location>
        <position position="2"/>
    </location>
</feature>
<feature type="modified residue" description="N6-acetyllysine" evidence="4">
    <location>
        <position position="494"/>
    </location>
</feature>
<organism>
    <name type="scientific">Bos taurus</name>
    <name type="common">Bovine</name>
    <dbReference type="NCBI Taxonomy" id="9913"/>
    <lineage>
        <taxon>Eukaryota</taxon>
        <taxon>Metazoa</taxon>
        <taxon>Chordata</taxon>
        <taxon>Craniata</taxon>
        <taxon>Vertebrata</taxon>
        <taxon>Euteleostomi</taxon>
        <taxon>Mammalia</taxon>
        <taxon>Eutheria</taxon>
        <taxon>Laurasiatheria</taxon>
        <taxon>Artiodactyla</taxon>
        <taxon>Ruminantia</taxon>
        <taxon>Pecora</taxon>
        <taxon>Bovidae</taxon>
        <taxon>Bovinae</taxon>
        <taxon>Bos</taxon>
    </lineage>
</organism>
<reference key="1">
    <citation type="submission" date="2006-10" db="EMBL/GenBank/DDBJ databases">
        <authorList>
            <consortium name="NIH - Mammalian Gene Collection (MGC) project"/>
        </authorList>
    </citation>
    <scope>NUCLEOTIDE SEQUENCE [LARGE SCALE MRNA]</scope>
    <source>
        <strain>Hereford</strain>
        <tissue>Thalamus</tissue>
    </source>
</reference>
<reference key="2">
    <citation type="journal article" date="1991" name="Nature">
        <title>'Coatomer': a cytosolic protein complex containing subunits of non-clathrin-coated Golgi transport vesicles.</title>
        <authorList>
            <person name="Waters M.G."/>
            <person name="Serafini T."/>
            <person name="Rothman J.E."/>
        </authorList>
    </citation>
    <scope>SUBUNIT</scope>
    <scope>SUBCELLULAR LOCATION</scope>
</reference>
<reference key="3">
    <citation type="journal article" date="1992" name="Proc. Natl. Acad. Sci. U.S.A.">
        <title>ADP-ribosylation factor, a small GTP-binding protein, is required for binding of the coatomer protein beta-COP to Golgi membranes.</title>
        <authorList>
            <person name="Donaldson J.G."/>
            <person name="Cassel D."/>
            <person name="Kahn R.A."/>
            <person name="Klausner R.D."/>
        </authorList>
    </citation>
    <scope>FUNCTION</scope>
    <scope>SUBCELLULAR LOCATION</scope>
</reference>
<reference key="4">
    <citation type="journal article" date="1993" name="J. Biol. Chem.">
        <title>Binding of coatomer to Golgi membranes requires ADP-ribosylation factor.</title>
        <authorList>
            <person name="Palmer D.J."/>
            <person name="Helms J.B."/>
            <person name="Beckers C.J."/>
            <person name="Orci L."/>
            <person name="Rothman J.E."/>
        </authorList>
    </citation>
    <scope>INTERACTION WITH ARF1</scope>
    <scope>SUBCELLULAR LOCATION</scope>
</reference>
<dbReference type="EMBL" id="BC126502">
    <property type="protein sequence ID" value="AAI26503.1"/>
    <property type="molecule type" value="mRNA"/>
</dbReference>
<dbReference type="RefSeq" id="NP_001071475.1">
    <property type="nucleotide sequence ID" value="NM_001078007.1"/>
</dbReference>
<dbReference type="RefSeq" id="XP_015330164.1">
    <property type="nucleotide sequence ID" value="XM_015474678.1"/>
</dbReference>
<dbReference type="SMR" id="A0JN39"/>
<dbReference type="BioGRID" id="192108">
    <property type="interactions" value="1"/>
</dbReference>
<dbReference type="FunCoup" id="A0JN39">
    <property type="interactions" value="4410"/>
</dbReference>
<dbReference type="STRING" id="9913.ENSBTAP00000008616"/>
<dbReference type="PaxDb" id="9913-ENSBTAP00000008616"/>
<dbReference type="PeptideAtlas" id="A0JN39"/>
<dbReference type="Ensembl" id="ENSBTAT00000008616.5">
    <property type="protein sequence ID" value="ENSBTAP00000008616.4"/>
    <property type="gene ID" value="ENSBTAG00000006556.6"/>
</dbReference>
<dbReference type="GeneID" id="535533"/>
<dbReference type="KEGG" id="bta:535533"/>
<dbReference type="CTD" id="1315"/>
<dbReference type="VEuPathDB" id="HostDB:ENSBTAG00000006556"/>
<dbReference type="VGNC" id="VGNC:27593">
    <property type="gene designation" value="COPB1"/>
</dbReference>
<dbReference type="eggNOG" id="KOG1058">
    <property type="taxonomic scope" value="Eukaryota"/>
</dbReference>
<dbReference type="GeneTree" id="ENSGT00390000005270"/>
<dbReference type="HOGENOM" id="CLU_006949_0_0_1"/>
<dbReference type="InParanoid" id="A0JN39"/>
<dbReference type="OMA" id="IYKNFDW"/>
<dbReference type="OrthoDB" id="10261439at2759"/>
<dbReference type="TreeFam" id="TF105737"/>
<dbReference type="Reactome" id="R-BTA-6798695">
    <property type="pathway name" value="Neutrophil degranulation"/>
</dbReference>
<dbReference type="Reactome" id="R-BTA-6807878">
    <property type="pathway name" value="COPI-mediated anterograde transport"/>
</dbReference>
<dbReference type="Reactome" id="R-BTA-6811434">
    <property type="pathway name" value="COPI-dependent Golgi-to-ER retrograde traffic"/>
</dbReference>
<dbReference type="Proteomes" id="UP000009136">
    <property type="component" value="Chromosome 15"/>
</dbReference>
<dbReference type="Bgee" id="ENSBTAG00000006556">
    <property type="expression patterns" value="Expressed in saliva-secreting gland and 107 other cell types or tissues"/>
</dbReference>
<dbReference type="GO" id="GO:0030126">
    <property type="term" value="C:COPI vesicle coat"/>
    <property type="evidence" value="ECO:0000318"/>
    <property type="project" value="GO_Central"/>
</dbReference>
<dbReference type="GO" id="GO:0005829">
    <property type="term" value="C:cytosol"/>
    <property type="evidence" value="ECO:0007669"/>
    <property type="project" value="UniProtKB-SubCell"/>
</dbReference>
<dbReference type="GO" id="GO:0005793">
    <property type="term" value="C:endoplasmic reticulum-Golgi intermediate compartment"/>
    <property type="evidence" value="ECO:0007669"/>
    <property type="project" value="UniProtKB-SubCell"/>
</dbReference>
<dbReference type="GO" id="GO:0000139">
    <property type="term" value="C:Golgi membrane"/>
    <property type="evidence" value="ECO:0007669"/>
    <property type="project" value="UniProtKB-SubCell"/>
</dbReference>
<dbReference type="GO" id="GO:0005886">
    <property type="term" value="C:plasma membrane"/>
    <property type="evidence" value="ECO:0007669"/>
    <property type="project" value="UniProtKB-SubCell"/>
</dbReference>
<dbReference type="GO" id="GO:0005198">
    <property type="term" value="F:structural molecule activity"/>
    <property type="evidence" value="ECO:0007669"/>
    <property type="project" value="InterPro"/>
</dbReference>
<dbReference type="GO" id="GO:0006888">
    <property type="term" value="P:endoplasmic reticulum to Golgi vesicle-mediated transport"/>
    <property type="evidence" value="ECO:0000318"/>
    <property type="project" value="GO_Central"/>
</dbReference>
<dbReference type="GO" id="GO:0006891">
    <property type="term" value="P:intra-Golgi vesicle-mediated transport"/>
    <property type="evidence" value="ECO:0000318"/>
    <property type="project" value="GO_Central"/>
</dbReference>
<dbReference type="GO" id="GO:0006886">
    <property type="term" value="P:intracellular protein transport"/>
    <property type="evidence" value="ECO:0007669"/>
    <property type="project" value="InterPro"/>
</dbReference>
<dbReference type="Gene3D" id="1.25.10.10">
    <property type="entry name" value="Leucine-rich Repeat Variant"/>
    <property type="match status" value="1"/>
</dbReference>
<dbReference type="InterPro" id="IPR011989">
    <property type="entry name" value="ARM-like"/>
</dbReference>
<dbReference type="InterPro" id="IPR016024">
    <property type="entry name" value="ARM-type_fold"/>
</dbReference>
<dbReference type="InterPro" id="IPR002553">
    <property type="entry name" value="Clathrin/coatomer_adapt-like_N"/>
</dbReference>
<dbReference type="InterPro" id="IPR011710">
    <property type="entry name" value="Coatomer_bsu_C"/>
</dbReference>
<dbReference type="InterPro" id="IPR016460">
    <property type="entry name" value="COPB1"/>
</dbReference>
<dbReference type="InterPro" id="IPR029446">
    <property type="entry name" value="COPB1_appendage_platform_dom"/>
</dbReference>
<dbReference type="PANTHER" id="PTHR10635">
    <property type="entry name" value="COATOMER SUBUNIT BETA"/>
    <property type="match status" value="1"/>
</dbReference>
<dbReference type="PANTHER" id="PTHR10635:SF0">
    <property type="entry name" value="COATOMER SUBUNIT BETA"/>
    <property type="match status" value="1"/>
</dbReference>
<dbReference type="Pfam" id="PF01602">
    <property type="entry name" value="Adaptin_N"/>
    <property type="match status" value="1"/>
</dbReference>
<dbReference type="Pfam" id="PF07718">
    <property type="entry name" value="Coatamer_beta_C"/>
    <property type="match status" value="1"/>
</dbReference>
<dbReference type="Pfam" id="PF14806">
    <property type="entry name" value="Coatomer_b_Cpla"/>
    <property type="match status" value="1"/>
</dbReference>
<dbReference type="PIRSF" id="PIRSF005727">
    <property type="entry name" value="Coatomer_beta_subunit"/>
    <property type="match status" value="1"/>
</dbReference>
<dbReference type="SUPFAM" id="SSF48371">
    <property type="entry name" value="ARM repeat"/>
    <property type="match status" value="1"/>
</dbReference>
<name>COPB_BOVIN</name>
<evidence type="ECO:0000250" key="1"/>
<evidence type="ECO:0000250" key="2">
    <source>
        <dbReference type="UniProtKB" id="P23514"/>
    </source>
</evidence>
<evidence type="ECO:0000250" key="3">
    <source>
        <dbReference type="UniProtKB" id="P53618"/>
    </source>
</evidence>
<evidence type="ECO:0000250" key="4">
    <source>
        <dbReference type="UniProtKB" id="Q9JIF7"/>
    </source>
</evidence>
<evidence type="ECO:0000269" key="5">
    <source>
    </source>
</evidence>
<evidence type="ECO:0000269" key="6">
    <source>
    </source>
</evidence>
<evidence type="ECO:0000269" key="7">
    <source>
    </source>
</evidence>